<proteinExistence type="inferred from homology"/>
<feature type="chain" id="PRO_1000022336" description="Bifunctional uridylyltransferase/uridylyl-removing enzyme">
    <location>
        <begin position="1"/>
        <end position="858"/>
    </location>
</feature>
<feature type="domain" description="HD" evidence="2">
    <location>
        <begin position="443"/>
        <end position="565"/>
    </location>
</feature>
<feature type="domain" description="ACT 1" evidence="1">
    <location>
        <begin position="682"/>
        <end position="761"/>
    </location>
</feature>
<feature type="domain" description="ACT 2" evidence="1">
    <location>
        <begin position="790"/>
        <end position="858"/>
    </location>
</feature>
<feature type="region of interest" description="Uridylyltransferase">
    <location>
        <begin position="1"/>
        <end position="324"/>
    </location>
</feature>
<feature type="region of interest" description="Uridylyl-removing">
    <location>
        <begin position="325"/>
        <end position="681"/>
    </location>
</feature>
<keyword id="KW-0378">Hydrolase</keyword>
<keyword id="KW-0460">Magnesium</keyword>
<keyword id="KW-0511">Multifunctional enzyme</keyword>
<keyword id="KW-0548">Nucleotidyltransferase</keyword>
<keyword id="KW-0677">Repeat</keyword>
<keyword id="KW-0808">Transferase</keyword>
<reference key="1">
    <citation type="journal article" date="2005" name="BMC Genomics">
        <title>Bacterial genome adaptation to niches: divergence of the potential virulence genes in three Burkholderia species of different survival strategies.</title>
        <authorList>
            <person name="Kim H.S."/>
            <person name="Schell M.A."/>
            <person name="Yu Y."/>
            <person name="Ulrich R.L."/>
            <person name="Sarria S.H."/>
            <person name="Nierman W.C."/>
            <person name="DeShazer D."/>
        </authorList>
    </citation>
    <scope>NUCLEOTIDE SEQUENCE [LARGE SCALE GENOMIC DNA]</scope>
    <source>
        <strain>ATCC 700388 / DSM 13276 / CCUG 48851 / CIP 106301 / E264</strain>
    </source>
</reference>
<comment type="function">
    <text evidence="1">Modifies, by uridylylation and deuridylylation, the PII regulatory proteins (GlnB and homologs), in response to the nitrogen status of the cell that GlnD senses through the glutamine level. Under low glutamine levels, catalyzes the conversion of the PII proteins and UTP to PII-UMP and PPi, while under higher glutamine levels, GlnD hydrolyzes PII-UMP to PII and UMP (deuridylylation). Thus, controls uridylylation state and activity of the PII proteins, and plays an important role in the regulation of nitrogen assimilation and metabolism.</text>
</comment>
<comment type="catalytic activity">
    <reaction evidence="1">
        <text>[protein-PII]-L-tyrosine + UTP = [protein-PII]-uridylyl-L-tyrosine + diphosphate</text>
        <dbReference type="Rhea" id="RHEA:13673"/>
        <dbReference type="Rhea" id="RHEA-COMP:12147"/>
        <dbReference type="Rhea" id="RHEA-COMP:12148"/>
        <dbReference type="ChEBI" id="CHEBI:33019"/>
        <dbReference type="ChEBI" id="CHEBI:46398"/>
        <dbReference type="ChEBI" id="CHEBI:46858"/>
        <dbReference type="ChEBI" id="CHEBI:90602"/>
        <dbReference type="EC" id="2.7.7.59"/>
    </reaction>
</comment>
<comment type="catalytic activity">
    <reaction evidence="1">
        <text>[protein-PII]-uridylyl-L-tyrosine + H2O = [protein-PII]-L-tyrosine + UMP + H(+)</text>
        <dbReference type="Rhea" id="RHEA:48600"/>
        <dbReference type="Rhea" id="RHEA-COMP:12147"/>
        <dbReference type="Rhea" id="RHEA-COMP:12148"/>
        <dbReference type="ChEBI" id="CHEBI:15377"/>
        <dbReference type="ChEBI" id="CHEBI:15378"/>
        <dbReference type="ChEBI" id="CHEBI:46858"/>
        <dbReference type="ChEBI" id="CHEBI:57865"/>
        <dbReference type="ChEBI" id="CHEBI:90602"/>
    </reaction>
</comment>
<comment type="cofactor">
    <cofactor evidence="1">
        <name>Mg(2+)</name>
        <dbReference type="ChEBI" id="CHEBI:18420"/>
    </cofactor>
</comment>
<comment type="activity regulation">
    <text evidence="1">Uridylyltransferase (UTase) activity is inhibited by glutamine, while glutamine activates uridylyl-removing (UR) activity.</text>
</comment>
<comment type="domain">
    <text evidence="1">Has four distinct domains: an N-terminal nucleotidyltransferase (NT) domain responsible for UTase activity, a central HD domain that encodes UR activity, and two C-terminal ACT domains that seem to have a role in glutamine sensing.</text>
</comment>
<comment type="similarity">
    <text evidence="1">Belongs to the GlnD family.</text>
</comment>
<dbReference type="EC" id="2.7.7.59" evidence="1"/>
<dbReference type="EC" id="3.1.4.-" evidence="1"/>
<dbReference type="EMBL" id="CP000086">
    <property type="protein sequence ID" value="ABC39424.1"/>
    <property type="molecule type" value="Genomic_DNA"/>
</dbReference>
<dbReference type="RefSeq" id="WP_009890434.1">
    <property type="nucleotide sequence ID" value="NZ_CP008785.1"/>
</dbReference>
<dbReference type="SMR" id="Q2SX00"/>
<dbReference type="GeneID" id="45121753"/>
<dbReference type="KEGG" id="bte:BTH_I2025"/>
<dbReference type="HOGENOM" id="CLU_012833_0_0_4"/>
<dbReference type="Proteomes" id="UP000001930">
    <property type="component" value="Chromosome I"/>
</dbReference>
<dbReference type="GO" id="GO:0008773">
    <property type="term" value="F:[protein-PII] uridylyltransferase activity"/>
    <property type="evidence" value="ECO:0007669"/>
    <property type="project" value="UniProtKB-UniRule"/>
</dbReference>
<dbReference type="GO" id="GO:0008081">
    <property type="term" value="F:phosphoric diester hydrolase activity"/>
    <property type="evidence" value="ECO:0007669"/>
    <property type="project" value="UniProtKB-UniRule"/>
</dbReference>
<dbReference type="GO" id="GO:0006808">
    <property type="term" value="P:regulation of nitrogen utilization"/>
    <property type="evidence" value="ECO:0007669"/>
    <property type="project" value="UniProtKB-UniRule"/>
</dbReference>
<dbReference type="CDD" id="cd04899">
    <property type="entry name" value="ACT_ACR-UUR-like_2"/>
    <property type="match status" value="1"/>
</dbReference>
<dbReference type="CDD" id="cd04900">
    <property type="entry name" value="ACT_UUR-like_1"/>
    <property type="match status" value="1"/>
</dbReference>
<dbReference type="CDD" id="cd00077">
    <property type="entry name" value="HDc"/>
    <property type="match status" value="1"/>
</dbReference>
<dbReference type="CDD" id="cd05401">
    <property type="entry name" value="NT_GlnE_GlnD_like"/>
    <property type="match status" value="1"/>
</dbReference>
<dbReference type="Gene3D" id="3.30.70.260">
    <property type="match status" value="1"/>
</dbReference>
<dbReference type="Gene3D" id="3.30.460.10">
    <property type="entry name" value="Beta Polymerase, domain 2"/>
    <property type="match status" value="1"/>
</dbReference>
<dbReference type="Gene3D" id="1.10.3210.10">
    <property type="entry name" value="Hypothetical protein af1432"/>
    <property type="match status" value="1"/>
</dbReference>
<dbReference type="Gene3D" id="1.20.120.330">
    <property type="entry name" value="Nucleotidyltransferases domain 2"/>
    <property type="match status" value="1"/>
</dbReference>
<dbReference type="HAMAP" id="MF_00277">
    <property type="entry name" value="PII_uridylyl_transf"/>
    <property type="match status" value="1"/>
</dbReference>
<dbReference type="InterPro" id="IPR045865">
    <property type="entry name" value="ACT-like_dom_sf"/>
</dbReference>
<dbReference type="InterPro" id="IPR002912">
    <property type="entry name" value="ACT_dom"/>
</dbReference>
<dbReference type="InterPro" id="IPR003607">
    <property type="entry name" value="HD/PDEase_dom"/>
</dbReference>
<dbReference type="InterPro" id="IPR006674">
    <property type="entry name" value="HD_domain"/>
</dbReference>
<dbReference type="InterPro" id="IPR043519">
    <property type="entry name" value="NT_sf"/>
</dbReference>
<dbReference type="InterPro" id="IPR013546">
    <property type="entry name" value="PII_UdlTrfase/GS_AdlTrfase"/>
</dbReference>
<dbReference type="InterPro" id="IPR002934">
    <property type="entry name" value="Polymerase_NTP_transf_dom"/>
</dbReference>
<dbReference type="InterPro" id="IPR010043">
    <property type="entry name" value="UTase/UR"/>
</dbReference>
<dbReference type="NCBIfam" id="NF002837">
    <property type="entry name" value="PRK03059.1"/>
    <property type="match status" value="1"/>
</dbReference>
<dbReference type="NCBIfam" id="TIGR01693">
    <property type="entry name" value="UTase_glnD"/>
    <property type="match status" value="1"/>
</dbReference>
<dbReference type="PANTHER" id="PTHR47320">
    <property type="entry name" value="BIFUNCTIONAL URIDYLYLTRANSFERASE/URIDYLYL-REMOVING ENZYME"/>
    <property type="match status" value="1"/>
</dbReference>
<dbReference type="PANTHER" id="PTHR47320:SF1">
    <property type="entry name" value="BIFUNCTIONAL URIDYLYLTRANSFERASE_URIDYLYL-REMOVING ENZYME"/>
    <property type="match status" value="1"/>
</dbReference>
<dbReference type="Pfam" id="PF08335">
    <property type="entry name" value="GlnD_UR_UTase"/>
    <property type="match status" value="1"/>
</dbReference>
<dbReference type="Pfam" id="PF01966">
    <property type="entry name" value="HD"/>
    <property type="match status" value="1"/>
</dbReference>
<dbReference type="Pfam" id="PF01909">
    <property type="entry name" value="NTP_transf_2"/>
    <property type="match status" value="1"/>
</dbReference>
<dbReference type="PIRSF" id="PIRSF006288">
    <property type="entry name" value="PII_uridyltransf"/>
    <property type="match status" value="1"/>
</dbReference>
<dbReference type="SMART" id="SM00471">
    <property type="entry name" value="HDc"/>
    <property type="match status" value="1"/>
</dbReference>
<dbReference type="SUPFAM" id="SSF55021">
    <property type="entry name" value="ACT-like"/>
    <property type="match status" value="2"/>
</dbReference>
<dbReference type="SUPFAM" id="SSF109604">
    <property type="entry name" value="HD-domain/PDEase-like"/>
    <property type="match status" value="1"/>
</dbReference>
<dbReference type="SUPFAM" id="SSF81301">
    <property type="entry name" value="Nucleotidyltransferase"/>
    <property type="match status" value="1"/>
</dbReference>
<dbReference type="SUPFAM" id="SSF81593">
    <property type="entry name" value="Nucleotidyltransferase substrate binding subunit/domain"/>
    <property type="match status" value="1"/>
</dbReference>
<dbReference type="PROSITE" id="PS51671">
    <property type="entry name" value="ACT"/>
    <property type="match status" value="2"/>
</dbReference>
<dbReference type="PROSITE" id="PS51831">
    <property type="entry name" value="HD"/>
    <property type="match status" value="1"/>
</dbReference>
<gene>
    <name evidence="1" type="primary">glnD</name>
    <name type="ordered locus">BTH_I2025</name>
</gene>
<organism>
    <name type="scientific">Burkholderia thailandensis (strain ATCC 700388 / DSM 13276 / CCUG 48851 / CIP 106301 / E264)</name>
    <dbReference type="NCBI Taxonomy" id="271848"/>
    <lineage>
        <taxon>Bacteria</taxon>
        <taxon>Pseudomonadati</taxon>
        <taxon>Pseudomonadota</taxon>
        <taxon>Betaproteobacteria</taxon>
        <taxon>Burkholderiales</taxon>
        <taxon>Burkholderiaceae</taxon>
        <taxon>Burkholderia</taxon>
        <taxon>pseudomallei group</taxon>
    </lineage>
</organism>
<accession>Q2SX00</accession>
<evidence type="ECO:0000255" key="1">
    <source>
        <dbReference type="HAMAP-Rule" id="MF_00277"/>
    </source>
</evidence>
<evidence type="ECO:0000255" key="2">
    <source>
        <dbReference type="PROSITE-ProRule" id="PRU01175"/>
    </source>
</evidence>
<sequence length="858" mass="96880">MSASVAAPPPALSRKAEFKAAKAELLARFQTATNVTPLMHALSRATDDALRRLWHECGLPATLALVAVGGFGRGELSPHSDVDILVLLPDAHARELDERIERFIGMAWDLGLEIGSSVRTVDQCIEEASQDVTVQTSLLEARRIVGSTALFERFMLRYREALDARAFFQAKVLEMRQRHAKFQDTPYSLEPNVKESPGGLRDLQTILWIARAAGFGSSWRELDTRGLITDREARELRRNEGFLKTLRARLHVIAGRRQDILVFDLQTQAAESFGYRPTPAKRASEQLMRRYYWAAKAVTQLATILIQNIEAQLFPATSGVTRVLSPGRFVEKQGMLEIAADDVFERHPDAILEAFLLYEATRGVKGLSARTLRALYNSRDVMNNAWRRDPRNRHTFMQILQQPEGITHAFRLMNQTSVLGRYLLNFRRIVGQMQHDLYHVYTVDQHILMVLRNIRRFAVAEHAHEYPFCSQLIVNFERPWVLYVAALFHDIAKGRGGDHSALGMTDARRFCREHGIEGGDAALVVWLVQHHLTMSQVAQKQDTSDPEVIKRFADLVGNERRLTALYLLTVADIRGTSPKVWNTWKGKLLEDLYRATLAVLGGAQPDAHSELKTRQEEALALLRLETVPPDAHRALWDQLDVGYFLRHDAADIAWQTRVLYRHVAADTAIVRARPSPVGDALQVLVYVKDRSDLFAGICAYFDRNGLSVLDARVNTTRHGYALDNFIVTQTERDVQYRDIANLVEQQLAARLAESAPLPEPSKGRLSRLSRTFPITPRVDLRADERGQYYILSVSANDRPGLLYSIARVLAEHRVGVHAARINTLGERVEDVFMLDGTGLSDNRLQIQVETELLRAIAV</sequence>
<name>GLND_BURTA</name>
<protein>
    <recommendedName>
        <fullName evidence="1">Bifunctional uridylyltransferase/uridylyl-removing enzyme</fullName>
        <shortName evidence="1">UTase/UR</shortName>
    </recommendedName>
    <alternativeName>
        <fullName evidence="1">Bifunctional [protein-PII] modification enzyme</fullName>
    </alternativeName>
    <alternativeName>
        <fullName evidence="1">Bifunctional nitrogen sensor protein</fullName>
    </alternativeName>
    <domain>
        <recommendedName>
            <fullName evidence="1">[Protein-PII] uridylyltransferase</fullName>
            <shortName evidence="1">PII uridylyltransferase</shortName>
            <shortName evidence="1">UTase</shortName>
            <ecNumber evidence="1">2.7.7.59</ecNumber>
        </recommendedName>
    </domain>
    <domain>
        <recommendedName>
            <fullName evidence="1">[Protein-PII]-UMP uridylyl-removing enzyme</fullName>
            <shortName evidence="1">UR</shortName>
            <ecNumber evidence="1">3.1.4.-</ecNumber>
        </recommendedName>
    </domain>
</protein>